<reference key="1">
    <citation type="journal article" date="2006" name="J. Bacteriol.">
        <title>Genome sequence of Aeromonas hydrophila ATCC 7966T: jack of all trades.</title>
        <authorList>
            <person name="Seshadri R."/>
            <person name="Joseph S.W."/>
            <person name="Chopra A.K."/>
            <person name="Sha J."/>
            <person name="Shaw J."/>
            <person name="Graf J."/>
            <person name="Haft D.H."/>
            <person name="Wu M."/>
            <person name="Ren Q."/>
            <person name="Rosovitz M.J."/>
            <person name="Madupu R."/>
            <person name="Tallon L."/>
            <person name="Kim M."/>
            <person name="Jin S."/>
            <person name="Vuong H."/>
            <person name="Stine O.C."/>
            <person name="Ali A."/>
            <person name="Horneman A.J."/>
            <person name="Heidelberg J.F."/>
        </authorList>
    </citation>
    <scope>NUCLEOTIDE SEQUENCE [LARGE SCALE GENOMIC DNA]</scope>
    <source>
        <strain>ATCC 7966 / DSM 30187 / BCRC 13018 / CCUG 14551 / JCM 1027 / KCTC 2358 / NCIMB 9240 / NCTC 8049</strain>
    </source>
</reference>
<sequence length="482" mass="54562">MKFIIKLFPEITIKSKSVRQRFIKILQGNIRNVLRRFDDDARVRMDWDKLIVSSRNDQFREQAIEALACIPGIQAFLEVQASKFTDLHDIFEQVKAVWGDQLEGKTFCVRAKRHGKHEFSSLEVERYVGGGLNQHCVSNGVRLKNPDVKINLEIDGEELFIVSAIHQGLSGMPIATQEDVLSLISGGFDSGVASFQFIKRGCRVHYCFFNLGGAAHEIGVKQVAYHLWNRFGSSHRVRFTAVDFEPVVAEILEKIDNGQMGVVLKRMMMRAAAKVADEFQIPALVTGECVGQVSSQTLTNLNVIDRVTDKVILRPLITWDKPDIISEARRIGTLEFAETMPEYCGVISKKPTVKAELSRIEAEEENFDFAILDKVVAEARYLDIRRIGEETAAEVQEVETTAESGDNEVILDIRSMDEHNEKPLLVEGREVMHIPFFKLTTAFGDLPKEKTYLLYCDRGVMSKLQALYLKEKGFANVKVYRP</sequence>
<name>THII_AERHH</name>
<feature type="chain" id="PRO_1000074198" description="tRNA sulfurtransferase">
    <location>
        <begin position="1"/>
        <end position="482"/>
    </location>
</feature>
<feature type="domain" description="THUMP" evidence="1">
    <location>
        <begin position="61"/>
        <end position="165"/>
    </location>
</feature>
<feature type="domain" description="Rhodanese" evidence="1">
    <location>
        <begin position="404"/>
        <end position="482"/>
    </location>
</feature>
<feature type="active site" description="Cysteine persulfide intermediate" evidence="1">
    <location>
        <position position="456"/>
    </location>
</feature>
<feature type="binding site" evidence="1">
    <location>
        <begin position="183"/>
        <end position="184"/>
    </location>
    <ligand>
        <name>ATP</name>
        <dbReference type="ChEBI" id="CHEBI:30616"/>
    </ligand>
</feature>
<feature type="binding site" evidence="1">
    <location>
        <position position="265"/>
    </location>
    <ligand>
        <name>ATP</name>
        <dbReference type="ChEBI" id="CHEBI:30616"/>
    </ligand>
</feature>
<feature type="binding site" evidence="1">
    <location>
        <position position="287"/>
    </location>
    <ligand>
        <name>ATP</name>
        <dbReference type="ChEBI" id="CHEBI:30616"/>
    </ligand>
</feature>
<feature type="binding site" evidence="1">
    <location>
        <position position="296"/>
    </location>
    <ligand>
        <name>ATP</name>
        <dbReference type="ChEBI" id="CHEBI:30616"/>
    </ligand>
</feature>
<feature type="disulfide bond" description="Redox-active" evidence="1">
    <location>
        <begin position="344"/>
        <end position="456"/>
    </location>
</feature>
<protein>
    <recommendedName>
        <fullName evidence="1">tRNA sulfurtransferase</fullName>
        <ecNumber evidence="1">2.8.1.4</ecNumber>
    </recommendedName>
    <alternativeName>
        <fullName evidence="1">Sulfur carrier protein ThiS sulfurtransferase</fullName>
    </alternativeName>
    <alternativeName>
        <fullName evidence="1">Thiamine biosynthesis protein ThiI</fullName>
    </alternativeName>
    <alternativeName>
        <fullName evidence="1">tRNA 4-thiouridine synthase</fullName>
    </alternativeName>
</protein>
<dbReference type="EC" id="2.8.1.4" evidence="1"/>
<dbReference type="EMBL" id="CP000462">
    <property type="protein sequence ID" value="ABK38567.1"/>
    <property type="molecule type" value="Genomic_DNA"/>
</dbReference>
<dbReference type="RefSeq" id="WP_011705585.1">
    <property type="nucleotide sequence ID" value="NC_008570.1"/>
</dbReference>
<dbReference type="RefSeq" id="YP_856231.1">
    <property type="nucleotide sequence ID" value="NC_008570.1"/>
</dbReference>
<dbReference type="SMR" id="A0KIY0"/>
<dbReference type="STRING" id="380703.AHA_1695"/>
<dbReference type="EnsemblBacteria" id="ABK38567">
    <property type="protein sequence ID" value="ABK38567"/>
    <property type="gene ID" value="AHA_1695"/>
</dbReference>
<dbReference type="GeneID" id="4490825"/>
<dbReference type="KEGG" id="aha:AHA_1695"/>
<dbReference type="PATRIC" id="fig|380703.7.peg.1710"/>
<dbReference type="eggNOG" id="COG0301">
    <property type="taxonomic scope" value="Bacteria"/>
</dbReference>
<dbReference type="eggNOG" id="COG0607">
    <property type="taxonomic scope" value="Bacteria"/>
</dbReference>
<dbReference type="HOGENOM" id="CLU_037952_4_1_6"/>
<dbReference type="OrthoDB" id="9773948at2"/>
<dbReference type="UniPathway" id="UPA00060"/>
<dbReference type="Proteomes" id="UP000000756">
    <property type="component" value="Chromosome"/>
</dbReference>
<dbReference type="GO" id="GO:0005829">
    <property type="term" value="C:cytosol"/>
    <property type="evidence" value="ECO:0007669"/>
    <property type="project" value="TreeGrafter"/>
</dbReference>
<dbReference type="GO" id="GO:0005524">
    <property type="term" value="F:ATP binding"/>
    <property type="evidence" value="ECO:0007669"/>
    <property type="project" value="UniProtKB-UniRule"/>
</dbReference>
<dbReference type="GO" id="GO:0004810">
    <property type="term" value="F:CCA tRNA nucleotidyltransferase activity"/>
    <property type="evidence" value="ECO:0007669"/>
    <property type="project" value="InterPro"/>
</dbReference>
<dbReference type="GO" id="GO:0000049">
    <property type="term" value="F:tRNA binding"/>
    <property type="evidence" value="ECO:0007669"/>
    <property type="project" value="UniProtKB-UniRule"/>
</dbReference>
<dbReference type="GO" id="GO:0140741">
    <property type="term" value="F:tRNA-uracil-4 sulfurtransferase activity"/>
    <property type="evidence" value="ECO:0007669"/>
    <property type="project" value="UniProtKB-EC"/>
</dbReference>
<dbReference type="GO" id="GO:0009228">
    <property type="term" value="P:thiamine biosynthetic process"/>
    <property type="evidence" value="ECO:0007669"/>
    <property type="project" value="UniProtKB-KW"/>
</dbReference>
<dbReference type="GO" id="GO:0009229">
    <property type="term" value="P:thiamine diphosphate biosynthetic process"/>
    <property type="evidence" value="ECO:0007669"/>
    <property type="project" value="UniProtKB-UniRule"/>
</dbReference>
<dbReference type="GO" id="GO:0052837">
    <property type="term" value="P:thiazole biosynthetic process"/>
    <property type="evidence" value="ECO:0007669"/>
    <property type="project" value="InterPro"/>
</dbReference>
<dbReference type="GO" id="GO:0002937">
    <property type="term" value="P:tRNA 4-thiouridine biosynthesis"/>
    <property type="evidence" value="ECO:0007669"/>
    <property type="project" value="TreeGrafter"/>
</dbReference>
<dbReference type="CDD" id="cd01712">
    <property type="entry name" value="PPase_ThiI"/>
    <property type="match status" value="1"/>
</dbReference>
<dbReference type="CDD" id="cd00158">
    <property type="entry name" value="RHOD"/>
    <property type="match status" value="1"/>
</dbReference>
<dbReference type="CDD" id="cd11716">
    <property type="entry name" value="THUMP_ThiI"/>
    <property type="match status" value="1"/>
</dbReference>
<dbReference type="FunFam" id="3.40.50.620:FF:000029">
    <property type="entry name" value="tRNA sulfurtransferase"/>
    <property type="match status" value="1"/>
</dbReference>
<dbReference type="Gene3D" id="3.30.2130.30">
    <property type="match status" value="1"/>
</dbReference>
<dbReference type="Gene3D" id="3.40.50.620">
    <property type="entry name" value="HUPs"/>
    <property type="match status" value="1"/>
</dbReference>
<dbReference type="Gene3D" id="3.40.250.10">
    <property type="entry name" value="Rhodanese-like domain"/>
    <property type="match status" value="1"/>
</dbReference>
<dbReference type="HAMAP" id="MF_00021">
    <property type="entry name" value="ThiI"/>
    <property type="match status" value="1"/>
</dbReference>
<dbReference type="InterPro" id="IPR001763">
    <property type="entry name" value="Rhodanese-like_dom"/>
</dbReference>
<dbReference type="InterPro" id="IPR036873">
    <property type="entry name" value="Rhodanese-like_dom_sf"/>
</dbReference>
<dbReference type="InterPro" id="IPR014729">
    <property type="entry name" value="Rossmann-like_a/b/a_fold"/>
</dbReference>
<dbReference type="InterPro" id="IPR020536">
    <property type="entry name" value="ThiI_AANH"/>
</dbReference>
<dbReference type="InterPro" id="IPR054173">
    <property type="entry name" value="ThiI_fer"/>
</dbReference>
<dbReference type="InterPro" id="IPR049961">
    <property type="entry name" value="ThiI_N"/>
</dbReference>
<dbReference type="InterPro" id="IPR026340">
    <property type="entry name" value="THII_Thiazole_biosynth_dom"/>
</dbReference>
<dbReference type="InterPro" id="IPR004114">
    <property type="entry name" value="THUMP_dom"/>
</dbReference>
<dbReference type="InterPro" id="IPR049962">
    <property type="entry name" value="THUMP_ThiI"/>
</dbReference>
<dbReference type="InterPro" id="IPR003720">
    <property type="entry name" value="tRNA_STrfase"/>
</dbReference>
<dbReference type="InterPro" id="IPR050102">
    <property type="entry name" value="tRNA_sulfurtransferase_ThiI"/>
</dbReference>
<dbReference type="NCBIfam" id="TIGR04271">
    <property type="entry name" value="ThiI_C_thiazole"/>
    <property type="match status" value="1"/>
</dbReference>
<dbReference type="NCBIfam" id="TIGR00342">
    <property type="entry name" value="tRNA uracil 4-sulfurtransferase ThiI"/>
    <property type="match status" value="1"/>
</dbReference>
<dbReference type="PANTHER" id="PTHR43209">
    <property type="entry name" value="TRNA SULFURTRANSFERASE"/>
    <property type="match status" value="1"/>
</dbReference>
<dbReference type="PANTHER" id="PTHR43209:SF1">
    <property type="entry name" value="TRNA SULFURTRANSFERASE"/>
    <property type="match status" value="1"/>
</dbReference>
<dbReference type="Pfam" id="PF00581">
    <property type="entry name" value="Rhodanese"/>
    <property type="match status" value="1"/>
</dbReference>
<dbReference type="Pfam" id="PF02568">
    <property type="entry name" value="ThiI"/>
    <property type="match status" value="1"/>
</dbReference>
<dbReference type="Pfam" id="PF22025">
    <property type="entry name" value="ThiI_fer"/>
    <property type="match status" value="1"/>
</dbReference>
<dbReference type="Pfam" id="PF02926">
    <property type="entry name" value="THUMP"/>
    <property type="match status" value="1"/>
</dbReference>
<dbReference type="SMART" id="SM00981">
    <property type="entry name" value="THUMP"/>
    <property type="match status" value="1"/>
</dbReference>
<dbReference type="SUPFAM" id="SSF52402">
    <property type="entry name" value="Adenine nucleotide alpha hydrolases-like"/>
    <property type="match status" value="1"/>
</dbReference>
<dbReference type="SUPFAM" id="SSF52821">
    <property type="entry name" value="Rhodanese/Cell cycle control phosphatase"/>
    <property type="match status" value="1"/>
</dbReference>
<dbReference type="SUPFAM" id="SSF143437">
    <property type="entry name" value="THUMP domain-like"/>
    <property type="match status" value="1"/>
</dbReference>
<dbReference type="PROSITE" id="PS50206">
    <property type="entry name" value="RHODANESE_3"/>
    <property type="match status" value="1"/>
</dbReference>
<dbReference type="PROSITE" id="PS51165">
    <property type="entry name" value="THUMP"/>
    <property type="match status" value="1"/>
</dbReference>
<keyword id="KW-0067">ATP-binding</keyword>
<keyword id="KW-0963">Cytoplasm</keyword>
<keyword id="KW-1015">Disulfide bond</keyword>
<keyword id="KW-0547">Nucleotide-binding</keyword>
<keyword id="KW-0676">Redox-active center</keyword>
<keyword id="KW-1185">Reference proteome</keyword>
<keyword id="KW-0694">RNA-binding</keyword>
<keyword id="KW-0784">Thiamine biosynthesis</keyword>
<keyword id="KW-0808">Transferase</keyword>
<keyword id="KW-0820">tRNA-binding</keyword>
<comment type="function">
    <text evidence="1">Catalyzes the ATP-dependent transfer of a sulfur to tRNA to produce 4-thiouridine in position 8 of tRNAs, which functions as a near-UV photosensor. Also catalyzes the transfer of sulfur to the sulfur carrier protein ThiS, forming ThiS-thiocarboxylate. This is a step in the synthesis of thiazole, in the thiamine biosynthesis pathway. The sulfur is donated as persulfide by IscS.</text>
</comment>
<comment type="catalytic activity">
    <reaction evidence="1">
        <text>[ThiI sulfur-carrier protein]-S-sulfanyl-L-cysteine + a uridine in tRNA + 2 reduced [2Fe-2S]-[ferredoxin] + ATP + H(+) = [ThiI sulfur-carrier protein]-L-cysteine + a 4-thiouridine in tRNA + 2 oxidized [2Fe-2S]-[ferredoxin] + AMP + diphosphate</text>
        <dbReference type="Rhea" id="RHEA:24176"/>
        <dbReference type="Rhea" id="RHEA-COMP:10000"/>
        <dbReference type="Rhea" id="RHEA-COMP:10001"/>
        <dbReference type="Rhea" id="RHEA-COMP:13337"/>
        <dbReference type="Rhea" id="RHEA-COMP:13338"/>
        <dbReference type="Rhea" id="RHEA-COMP:13339"/>
        <dbReference type="Rhea" id="RHEA-COMP:13340"/>
        <dbReference type="ChEBI" id="CHEBI:15378"/>
        <dbReference type="ChEBI" id="CHEBI:29950"/>
        <dbReference type="ChEBI" id="CHEBI:30616"/>
        <dbReference type="ChEBI" id="CHEBI:33019"/>
        <dbReference type="ChEBI" id="CHEBI:33737"/>
        <dbReference type="ChEBI" id="CHEBI:33738"/>
        <dbReference type="ChEBI" id="CHEBI:61963"/>
        <dbReference type="ChEBI" id="CHEBI:65315"/>
        <dbReference type="ChEBI" id="CHEBI:136798"/>
        <dbReference type="ChEBI" id="CHEBI:456215"/>
        <dbReference type="EC" id="2.8.1.4"/>
    </reaction>
</comment>
<comment type="catalytic activity">
    <reaction evidence="1">
        <text>[ThiS sulfur-carrier protein]-C-terminal Gly-Gly-AMP + S-sulfanyl-L-cysteinyl-[cysteine desulfurase] + AH2 = [ThiS sulfur-carrier protein]-C-terminal-Gly-aminoethanethioate + L-cysteinyl-[cysteine desulfurase] + A + AMP + 2 H(+)</text>
        <dbReference type="Rhea" id="RHEA:43340"/>
        <dbReference type="Rhea" id="RHEA-COMP:12157"/>
        <dbReference type="Rhea" id="RHEA-COMP:12158"/>
        <dbReference type="Rhea" id="RHEA-COMP:12910"/>
        <dbReference type="Rhea" id="RHEA-COMP:19908"/>
        <dbReference type="ChEBI" id="CHEBI:13193"/>
        <dbReference type="ChEBI" id="CHEBI:15378"/>
        <dbReference type="ChEBI" id="CHEBI:17499"/>
        <dbReference type="ChEBI" id="CHEBI:29950"/>
        <dbReference type="ChEBI" id="CHEBI:61963"/>
        <dbReference type="ChEBI" id="CHEBI:90618"/>
        <dbReference type="ChEBI" id="CHEBI:232372"/>
        <dbReference type="ChEBI" id="CHEBI:456215"/>
    </reaction>
</comment>
<comment type="pathway">
    <text evidence="1">Cofactor biosynthesis; thiamine diphosphate biosynthesis.</text>
</comment>
<comment type="subcellular location">
    <subcellularLocation>
        <location evidence="1">Cytoplasm</location>
    </subcellularLocation>
</comment>
<comment type="similarity">
    <text evidence="1">Belongs to the ThiI family.</text>
</comment>
<accession>A0KIY0</accession>
<organism>
    <name type="scientific">Aeromonas hydrophila subsp. hydrophila (strain ATCC 7966 / DSM 30187 / BCRC 13018 / CCUG 14551 / JCM 1027 / KCTC 2358 / NCIMB 9240 / NCTC 8049)</name>
    <dbReference type="NCBI Taxonomy" id="380703"/>
    <lineage>
        <taxon>Bacteria</taxon>
        <taxon>Pseudomonadati</taxon>
        <taxon>Pseudomonadota</taxon>
        <taxon>Gammaproteobacteria</taxon>
        <taxon>Aeromonadales</taxon>
        <taxon>Aeromonadaceae</taxon>
        <taxon>Aeromonas</taxon>
    </lineage>
</organism>
<gene>
    <name evidence="1" type="primary">thiI</name>
    <name type="ordered locus">AHA_1695</name>
</gene>
<proteinExistence type="inferred from homology"/>
<evidence type="ECO:0000255" key="1">
    <source>
        <dbReference type="HAMAP-Rule" id="MF_00021"/>
    </source>
</evidence>